<organism>
    <name type="scientific">Arabidopsis thaliana</name>
    <name type="common">Mouse-ear cress</name>
    <dbReference type="NCBI Taxonomy" id="3702"/>
    <lineage>
        <taxon>Eukaryota</taxon>
        <taxon>Viridiplantae</taxon>
        <taxon>Streptophyta</taxon>
        <taxon>Embryophyta</taxon>
        <taxon>Tracheophyta</taxon>
        <taxon>Spermatophyta</taxon>
        <taxon>Magnoliopsida</taxon>
        <taxon>eudicotyledons</taxon>
        <taxon>Gunneridae</taxon>
        <taxon>Pentapetalae</taxon>
        <taxon>rosids</taxon>
        <taxon>malvids</taxon>
        <taxon>Brassicales</taxon>
        <taxon>Brassicaceae</taxon>
        <taxon>Camelineae</taxon>
        <taxon>Arabidopsis</taxon>
    </lineage>
</organism>
<comment type="subcellular location">
    <subcellularLocation>
        <location evidence="3">Secreted</location>
    </subcellularLocation>
</comment>
<comment type="similarity">
    <text evidence="3">Belongs to the cysteine-rich repeat secretory protein family.</text>
</comment>
<comment type="sequence caution" evidence="3">
    <conflict type="erroneous gene model prediction">
        <sequence resource="EMBL-CDS" id="CAB45825"/>
    </conflict>
</comment>
<comment type="sequence caution" evidence="3">
    <conflict type="erroneous gene model prediction">
        <sequence resource="EMBL-CDS" id="CAB79059"/>
    </conflict>
</comment>
<protein>
    <recommendedName>
        <fullName>Cysteine-rich repeat secretory protein 48</fullName>
    </recommendedName>
</protein>
<evidence type="ECO:0000255" key="1"/>
<evidence type="ECO:0000255" key="2">
    <source>
        <dbReference type="PROSITE-ProRule" id="PRU00806"/>
    </source>
</evidence>
<evidence type="ECO:0000305" key="3"/>
<proteinExistence type="inferred from homology"/>
<feature type="signal peptide" evidence="1">
    <location>
        <begin position="1"/>
        <end position="26"/>
    </location>
</feature>
<feature type="chain" id="PRO_0000403944" description="Cysteine-rich repeat secretory protein 48">
    <location>
        <begin position="27"/>
        <end position="256"/>
    </location>
</feature>
<feature type="domain" description="Gnk2-homologous 1" evidence="2">
    <location>
        <begin position="33"/>
        <end position="136"/>
    </location>
</feature>
<feature type="domain" description="Gnk2-homologous 2" evidence="2">
    <location>
        <begin position="142"/>
        <end position="253"/>
    </location>
</feature>
<accession>P0CJ55</accession>
<accession>F4JVK9</accession>
<accession>Q680R8</accession>
<accession>Q9S7J6</accession>
<accession>Q9SUM6</accession>
<name>CRR48_ARATH</name>
<dbReference type="EMBL" id="AL080253">
    <property type="protein sequence ID" value="CAB45825.1"/>
    <property type="status" value="ALT_SEQ"/>
    <property type="molecule type" value="Genomic_DNA"/>
</dbReference>
<dbReference type="EMBL" id="AL161553">
    <property type="protein sequence ID" value="CAB79059.1"/>
    <property type="status" value="ALT_SEQ"/>
    <property type="molecule type" value="Genomic_DNA"/>
</dbReference>
<dbReference type="EMBL" id="CP002687">
    <property type="protein sequence ID" value="AEE84345.2"/>
    <property type="molecule type" value="Genomic_DNA"/>
</dbReference>
<dbReference type="PIR" id="T10595">
    <property type="entry name" value="T10595"/>
</dbReference>
<dbReference type="RefSeq" id="NP_001320013.1">
    <property type="nucleotide sequence ID" value="NM_001341449.1"/>
</dbReference>
<dbReference type="RefSeq" id="NP_567608.3">
    <property type="nucleotide sequence ID" value="NM_118177.3"/>
</dbReference>
<dbReference type="RefSeq" id="NP_567609.3">
    <property type="nucleotide sequence ID" value="NM_118178.3"/>
</dbReference>
<dbReference type="RefSeq" id="NP_567610.3">
    <property type="nucleotide sequence ID" value="NM_118179.3"/>
</dbReference>
<dbReference type="RefSeq" id="NP_567611.3">
    <property type="nucleotide sequence ID" value="NM_118180.3"/>
</dbReference>
<dbReference type="RefSeq" id="NP_567612.3">
    <property type="nucleotide sequence ID" value="NM_118181.3"/>
</dbReference>
<dbReference type="RefSeq" id="NP_567614.3">
    <property type="nucleotide sequence ID" value="NM_118183.3"/>
</dbReference>
<dbReference type="SMR" id="P0CJ55"/>
<dbReference type="EnsemblPlants" id="AT4G20580.1">
    <property type="protein sequence ID" value="AT4G20580.1"/>
    <property type="gene ID" value="AT4G20580"/>
</dbReference>
<dbReference type="EnsemblPlants" id="AT4G20590.1">
    <property type="protein sequence ID" value="AT4G20590.1"/>
    <property type="gene ID" value="AT4G20590"/>
</dbReference>
<dbReference type="EnsemblPlants" id="AT4G20600.1">
    <property type="protein sequence ID" value="AT4G20600.1"/>
    <property type="gene ID" value="AT4G20600"/>
</dbReference>
<dbReference type="EnsemblPlants" id="AT4G20610.1">
    <property type="protein sequence ID" value="AT4G20610.1"/>
    <property type="gene ID" value="AT4G20610"/>
</dbReference>
<dbReference type="EnsemblPlants" id="AT4G20620.1">
    <property type="protein sequence ID" value="AT4G20620.1"/>
    <property type="gene ID" value="AT4G20620"/>
</dbReference>
<dbReference type="EnsemblPlants" id="AT4G20630.1">
    <property type="protein sequence ID" value="AT4G20630.1"/>
    <property type="gene ID" value="AT4G20630"/>
</dbReference>
<dbReference type="EnsemblPlants" id="AT4G20640.1">
    <property type="protein sequence ID" value="AT4G20640.1"/>
    <property type="gene ID" value="AT4G20640"/>
</dbReference>
<dbReference type="GeneID" id="827807"/>
<dbReference type="Gramene" id="AT4G20580.1">
    <property type="protein sequence ID" value="AT4G20580.1"/>
    <property type="gene ID" value="AT4G20580"/>
</dbReference>
<dbReference type="Gramene" id="AT4G20590.1">
    <property type="protein sequence ID" value="AT4G20590.1"/>
    <property type="gene ID" value="AT4G20590"/>
</dbReference>
<dbReference type="Gramene" id="AT4G20600.1">
    <property type="protein sequence ID" value="AT4G20600.1"/>
    <property type="gene ID" value="AT4G20600"/>
</dbReference>
<dbReference type="Gramene" id="AT4G20610.1">
    <property type="protein sequence ID" value="AT4G20610.1"/>
    <property type="gene ID" value="AT4G20610"/>
</dbReference>
<dbReference type="Gramene" id="AT4G20620.1">
    <property type="protein sequence ID" value="AT4G20620.1"/>
    <property type="gene ID" value="AT4G20620"/>
</dbReference>
<dbReference type="Gramene" id="AT4G20630.1">
    <property type="protein sequence ID" value="AT4G20630.1"/>
    <property type="gene ID" value="AT4G20630"/>
</dbReference>
<dbReference type="Gramene" id="AT4G20640.1">
    <property type="protein sequence ID" value="AT4G20640.1"/>
    <property type="gene ID" value="AT4G20640"/>
</dbReference>
<dbReference type="KEGG" id="ath:AT4G20580"/>
<dbReference type="KEGG" id="ath:AT4G20590"/>
<dbReference type="KEGG" id="ath:AT4G20600"/>
<dbReference type="KEGG" id="ath:AT4G20610"/>
<dbReference type="KEGG" id="ath:AT4G20620"/>
<dbReference type="KEGG" id="ath:AT4G20630"/>
<dbReference type="KEGG" id="ath:AT4G20640"/>
<dbReference type="Araport" id="AT4G20590"/>
<dbReference type="TAIR" id="AT4G20590"/>
<dbReference type="HOGENOM" id="CLU_000288_35_0_1"/>
<dbReference type="InParanoid" id="P0CJ55"/>
<dbReference type="OMA" id="FIQVWNI"/>
<dbReference type="PRO" id="PR:P0CJ55"/>
<dbReference type="Proteomes" id="UP000006548">
    <property type="component" value="Chromosome 4"/>
</dbReference>
<dbReference type="ExpressionAtlas" id="P0CJ55">
    <property type="expression patterns" value="baseline"/>
</dbReference>
<dbReference type="GO" id="GO:0005576">
    <property type="term" value="C:extracellular region"/>
    <property type="evidence" value="ECO:0007669"/>
    <property type="project" value="UniProtKB-SubCell"/>
</dbReference>
<dbReference type="CDD" id="cd23509">
    <property type="entry name" value="Gnk2-like"/>
    <property type="match status" value="2"/>
</dbReference>
<dbReference type="FunFam" id="3.30.430.20:FF:000002">
    <property type="entry name" value="Cysteine-rich receptor-like protein kinase 10"/>
    <property type="match status" value="1"/>
</dbReference>
<dbReference type="Gene3D" id="3.30.430.20">
    <property type="entry name" value="Gnk2 domain, C-X8-C-X2-C motif"/>
    <property type="match status" value="2"/>
</dbReference>
<dbReference type="InterPro" id="IPR050581">
    <property type="entry name" value="CRR_secretory_protein"/>
</dbReference>
<dbReference type="InterPro" id="IPR002902">
    <property type="entry name" value="GNK2"/>
</dbReference>
<dbReference type="InterPro" id="IPR038408">
    <property type="entry name" value="GNK2_sf"/>
</dbReference>
<dbReference type="PANTHER" id="PTHR32411:SF54">
    <property type="entry name" value="CYSTEINE-RICH REPEAT SECRETORY PROTEIN 29-RELATED"/>
    <property type="match status" value="1"/>
</dbReference>
<dbReference type="PANTHER" id="PTHR32411">
    <property type="entry name" value="CYSTEINE-RICH REPEAT SECRETORY PROTEIN 38-RELATED"/>
    <property type="match status" value="1"/>
</dbReference>
<dbReference type="Pfam" id="PF01657">
    <property type="entry name" value="Stress-antifung"/>
    <property type="match status" value="2"/>
</dbReference>
<dbReference type="PROSITE" id="PS51473">
    <property type="entry name" value="GNK2"/>
    <property type="match status" value="2"/>
</dbReference>
<sequence length="256" mass="29018">MSSVFGSVHILAMIAIQLLLTHSVSSLNLTNAYLHHKCSNTQGKYKQGSAFEKNLNLVLSTITSIGNFRDGFRYTEEGEDPNNVFVMFQCRGDSYWSKCPPCISTAVSGLRRRCPRNKGAIIWYDQCLLKISSVASFNKIDYENDFYLSNPNNMSDRGLFNKETSALLEKLAYKASDRNNLDGKQLVLYAAGEKRIGTKKVYAMVQCTKDLIFTKCFECLEGILRKFPQCCDGKRGGRVFGTSCNFRYELYPFLRN</sequence>
<gene>
    <name type="primary">CRRSP48</name>
    <name type="ordered locus">At4g20590</name>
    <name type="ORF">F9F13.240</name>
</gene>
<keyword id="KW-1185">Reference proteome</keyword>
<keyword id="KW-0677">Repeat</keyword>
<keyword id="KW-0964">Secreted</keyword>
<keyword id="KW-0732">Signal</keyword>
<reference key="1">
    <citation type="journal article" date="1999" name="Nature">
        <title>Sequence and analysis of chromosome 4 of the plant Arabidopsis thaliana.</title>
        <authorList>
            <person name="Mayer K.F.X."/>
            <person name="Schueller C."/>
            <person name="Wambutt R."/>
            <person name="Murphy G."/>
            <person name="Volckaert G."/>
            <person name="Pohl T."/>
            <person name="Duesterhoeft A."/>
            <person name="Stiekema W."/>
            <person name="Entian K.-D."/>
            <person name="Terryn N."/>
            <person name="Harris B."/>
            <person name="Ansorge W."/>
            <person name="Brandt P."/>
            <person name="Grivell L.A."/>
            <person name="Rieger M."/>
            <person name="Weichselgartner M."/>
            <person name="de Simone V."/>
            <person name="Obermaier B."/>
            <person name="Mache R."/>
            <person name="Mueller M."/>
            <person name="Kreis M."/>
            <person name="Delseny M."/>
            <person name="Puigdomenech P."/>
            <person name="Watson M."/>
            <person name="Schmidtheini T."/>
            <person name="Reichert B."/>
            <person name="Portetelle D."/>
            <person name="Perez-Alonso M."/>
            <person name="Boutry M."/>
            <person name="Bancroft I."/>
            <person name="Vos P."/>
            <person name="Hoheisel J."/>
            <person name="Zimmermann W."/>
            <person name="Wedler H."/>
            <person name="Ridley P."/>
            <person name="Langham S.-A."/>
            <person name="McCullagh B."/>
            <person name="Bilham L."/>
            <person name="Robben J."/>
            <person name="van der Schueren J."/>
            <person name="Grymonprez B."/>
            <person name="Chuang Y.-J."/>
            <person name="Vandenbussche F."/>
            <person name="Braeken M."/>
            <person name="Weltjens I."/>
            <person name="Voet M."/>
            <person name="Bastiaens I."/>
            <person name="Aert R."/>
            <person name="Defoor E."/>
            <person name="Weitzenegger T."/>
            <person name="Bothe G."/>
            <person name="Ramsperger U."/>
            <person name="Hilbert H."/>
            <person name="Braun M."/>
            <person name="Holzer E."/>
            <person name="Brandt A."/>
            <person name="Peters S."/>
            <person name="van Staveren M."/>
            <person name="Dirkse W."/>
            <person name="Mooijman P."/>
            <person name="Klein Lankhorst R."/>
            <person name="Rose M."/>
            <person name="Hauf J."/>
            <person name="Koetter P."/>
            <person name="Berneiser S."/>
            <person name="Hempel S."/>
            <person name="Feldpausch M."/>
            <person name="Lamberth S."/>
            <person name="Van den Daele H."/>
            <person name="De Keyser A."/>
            <person name="Buysshaert C."/>
            <person name="Gielen J."/>
            <person name="Villarroel R."/>
            <person name="De Clercq R."/>
            <person name="van Montagu M."/>
            <person name="Rogers J."/>
            <person name="Cronin A."/>
            <person name="Quail M.A."/>
            <person name="Bray-Allen S."/>
            <person name="Clark L."/>
            <person name="Doggett J."/>
            <person name="Hall S."/>
            <person name="Kay M."/>
            <person name="Lennard N."/>
            <person name="McLay K."/>
            <person name="Mayes R."/>
            <person name="Pettett A."/>
            <person name="Rajandream M.A."/>
            <person name="Lyne M."/>
            <person name="Benes V."/>
            <person name="Rechmann S."/>
            <person name="Borkova D."/>
            <person name="Bloecker H."/>
            <person name="Scharfe M."/>
            <person name="Grimm M."/>
            <person name="Loehnert T.-H."/>
            <person name="Dose S."/>
            <person name="de Haan M."/>
            <person name="Maarse A.C."/>
            <person name="Schaefer M."/>
            <person name="Mueller-Auer S."/>
            <person name="Gabel C."/>
            <person name="Fuchs M."/>
            <person name="Fartmann B."/>
            <person name="Granderath K."/>
            <person name="Dauner D."/>
            <person name="Herzl A."/>
            <person name="Neumann S."/>
            <person name="Argiriou A."/>
            <person name="Vitale D."/>
            <person name="Liguori R."/>
            <person name="Piravandi E."/>
            <person name="Massenet O."/>
            <person name="Quigley F."/>
            <person name="Clabauld G."/>
            <person name="Muendlein A."/>
            <person name="Felber R."/>
            <person name="Schnabl S."/>
            <person name="Hiller R."/>
            <person name="Schmidt W."/>
            <person name="Lecharny A."/>
            <person name="Aubourg S."/>
            <person name="Chefdor F."/>
            <person name="Cooke R."/>
            <person name="Berger C."/>
            <person name="Monfort A."/>
            <person name="Casacuberta E."/>
            <person name="Gibbons T."/>
            <person name="Weber N."/>
            <person name="Vandenbol M."/>
            <person name="Bargues M."/>
            <person name="Terol J."/>
            <person name="Torres A."/>
            <person name="Perez-Perez A."/>
            <person name="Purnelle B."/>
            <person name="Bent E."/>
            <person name="Johnson S."/>
            <person name="Tacon D."/>
            <person name="Jesse T."/>
            <person name="Heijnen L."/>
            <person name="Schwarz S."/>
            <person name="Scholler P."/>
            <person name="Heber S."/>
            <person name="Francs P."/>
            <person name="Bielke C."/>
            <person name="Frishman D."/>
            <person name="Haase D."/>
            <person name="Lemcke K."/>
            <person name="Mewes H.-W."/>
            <person name="Stocker S."/>
            <person name="Zaccaria P."/>
            <person name="Bevan M."/>
            <person name="Wilson R.K."/>
            <person name="de la Bastide M."/>
            <person name="Habermann K."/>
            <person name="Parnell L."/>
            <person name="Dedhia N."/>
            <person name="Gnoj L."/>
            <person name="Schutz K."/>
            <person name="Huang E."/>
            <person name="Spiegel L."/>
            <person name="Sekhon M."/>
            <person name="Murray J."/>
            <person name="Sheet P."/>
            <person name="Cordes M."/>
            <person name="Abu-Threideh J."/>
            <person name="Stoneking T."/>
            <person name="Kalicki J."/>
            <person name="Graves T."/>
            <person name="Harmon G."/>
            <person name="Edwards J."/>
            <person name="Latreille P."/>
            <person name="Courtney L."/>
            <person name="Cloud J."/>
            <person name="Abbott A."/>
            <person name="Scott K."/>
            <person name="Johnson D."/>
            <person name="Minx P."/>
            <person name="Bentley D."/>
            <person name="Fulton B."/>
            <person name="Miller N."/>
            <person name="Greco T."/>
            <person name="Kemp K."/>
            <person name="Kramer J."/>
            <person name="Fulton L."/>
            <person name="Mardis E."/>
            <person name="Dante M."/>
            <person name="Pepin K."/>
            <person name="Hillier L.W."/>
            <person name="Nelson J."/>
            <person name="Spieth J."/>
            <person name="Ryan E."/>
            <person name="Andrews S."/>
            <person name="Geisel C."/>
            <person name="Layman D."/>
            <person name="Du H."/>
            <person name="Ali J."/>
            <person name="Berghoff A."/>
            <person name="Jones K."/>
            <person name="Drone K."/>
            <person name="Cotton M."/>
            <person name="Joshu C."/>
            <person name="Antonoiu B."/>
            <person name="Zidanic M."/>
            <person name="Strong C."/>
            <person name="Sun H."/>
            <person name="Lamar B."/>
            <person name="Yordan C."/>
            <person name="Ma P."/>
            <person name="Zhong J."/>
            <person name="Preston R."/>
            <person name="Vil D."/>
            <person name="Shekher M."/>
            <person name="Matero A."/>
            <person name="Shah R."/>
            <person name="Swaby I.K."/>
            <person name="O'Shaughnessy A."/>
            <person name="Rodriguez M."/>
            <person name="Hoffman J."/>
            <person name="Till S."/>
            <person name="Granat S."/>
            <person name="Shohdy N."/>
            <person name="Hasegawa A."/>
            <person name="Hameed A."/>
            <person name="Lodhi M."/>
            <person name="Johnson A."/>
            <person name="Chen E."/>
            <person name="Marra M.A."/>
            <person name="Martienssen R."/>
            <person name="McCombie W.R."/>
        </authorList>
    </citation>
    <scope>NUCLEOTIDE SEQUENCE [LARGE SCALE GENOMIC DNA]</scope>
    <source>
        <strain>cv. Columbia</strain>
    </source>
</reference>
<reference key="2">
    <citation type="journal article" date="2017" name="Plant J.">
        <title>Araport11: a complete reannotation of the Arabidopsis thaliana reference genome.</title>
        <authorList>
            <person name="Cheng C.Y."/>
            <person name="Krishnakumar V."/>
            <person name="Chan A.P."/>
            <person name="Thibaud-Nissen F."/>
            <person name="Schobel S."/>
            <person name="Town C.D."/>
        </authorList>
    </citation>
    <scope>GENOME REANNOTATION</scope>
    <source>
        <strain>cv. Columbia</strain>
    </source>
</reference>
<reference key="3">
    <citation type="journal article" date="2001" name="Plant Physiol.">
        <title>A superfamily of proteins with novel cysteine-rich repeats.</title>
        <authorList>
            <person name="Chen Z."/>
        </authorList>
    </citation>
    <scope>GENE FAMILY ORGANIZATION</scope>
    <scope>NOMENCLATURE</scope>
</reference>